<evidence type="ECO:0000255" key="1">
    <source>
        <dbReference type="HAMAP-Rule" id="MF_00101"/>
    </source>
</evidence>
<gene>
    <name evidence="1" type="primary">acpS</name>
    <name type="ordered locus">EFER_0511</name>
</gene>
<protein>
    <recommendedName>
        <fullName evidence="1">Holo-[acyl-carrier-protein] synthase</fullName>
        <shortName evidence="1">Holo-ACP synthase</shortName>
        <ecNumber evidence="1">2.7.8.7</ecNumber>
    </recommendedName>
    <alternativeName>
        <fullName evidence="1">4'-phosphopantetheinyl transferase AcpS</fullName>
    </alternativeName>
</protein>
<feature type="chain" id="PRO_1000117353" description="Holo-[acyl-carrier-protein] synthase">
    <location>
        <begin position="1"/>
        <end position="126"/>
    </location>
</feature>
<feature type="binding site" evidence="1">
    <location>
        <position position="9"/>
    </location>
    <ligand>
        <name>Mg(2+)</name>
        <dbReference type="ChEBI" id="CHEBI:18420"/>
    </ligand>
</feature>
<feature type="binding site" evidence="1">
    <location>
        <position position="58"/>
    </location>
    <ligand>
        <name>Mg(2+)</name>
        <dbReference type="ChEBI" id="CHEBI:18420"/>
    </ligand>
</feature>
<keyword id="KW-0963">Cytoplasm</keyword>
<keyword id="KW-0275">Fatty acid biosynthesis</keyword>
<keyword id="KW-0276">Fatty acid metabolism</keyword>
<keyword id="KW-0444">Lipid biosynthesis</keyword>
<keyword id="KW-0443">Lipid metabolism</keyword>
<keyword id="KW-0460">Magnesium</keyword>
<keyword id="KW-0479">Metal-binding</keyword>
<keyword id="KW-0808">Transferase</keyword>
<organism>
    <name type="scientific">Escherichia fergusonii (strain ATCC 35469 / DSM 13698 / CCUG 18766 / IAM 14443 / JCM 21226 / LMG 7866 / NBRC 102419 / NCTC 12128 / CDC 0568-73)</name>
    <dbReference type="NCBI Taxonomy" id="585054"/>
    <lineage>
        <taxon>Bacteria</taxon>
        <taxon>Pseudomonadati</taxon>
        <taxon>Pseudomonadota</taxon>
        <taxon>Gammaproteobacteria</taxon>
        <taxon>Enterobacterales</taxon>
        <taxon>Enterobacteriaceae</taxon>
        <taxon>Escherichia</taxon>
    </lineage>
</organism>
<dbReference type="EC" id="2.7.8.7" evidence="1"/>
<dbReference type="EMBL" id="CU928158">
    <property type="protein sequence ID" value="CAQ88059.1"/>
    <property type="molecule type" value="Genomic_DNA"/>
</dbReference>
<dbReference type="RefSeq" id="WP_000986048.1">
    <property type="nucleotide sequence ID" value="NC_011740.1"/>
</dbReference>
<dbReference type="SMR" id="B7LV01"/>
<dbReference type="GeneID" id="75058424"/>
<dbReference type="KEGG" id="efe:EFER_0511"/>
<dbReference type="HOGENOM" id="CLU_089696_3_1_6"/>
<dbReference type="OrthoDB" id="517356at2"/>
<dbReference type="Proteomes" id="UP000000745">
    <property type="component" value="Chromosome"/>
</dbReference>
<dbReference type="GO" id="GO:0005737">
    <property type="term" value="C:cytoplasm"/>
    <property type="evidence" value="ECO:0007669"/>
    <property type="project" value="UniProtKB-SubCell"/>
</dbReference>
<dbReference type="GO" id="GO:0008897">
    <property type="term" value="F:holo-[acyl-carrier-protein] synthase activity"/>
    <property type="evidence" value="ECO:0007669"/>
    <property type="project" value="UniProtKB-UniRule"/>
</dbReference>
<dbReference type="GO" id="GO:0000287">
    <property type="term" value="F:magnesium ion binding"/>
    <property type="evidence" value="ECO:0007669"/>
    <property type="project" value="UniProtKB-UniRule"/>
</dbReference>
<dbReference type="GO" id="GO:0006633">
    <property type="term" value="P:fatty acid biosynthetic process"/>
    <property type="evidence" value="ECO:0007669"/>
    <property type="project" value="UniProtKB-UniRule"/>
</dbReference>
<dbReference type="FunFam" id="3.90.470.20:FF:000001">
    <property type="entry name" value="Holo-[acyl-carrier-protein] synthase"/>
    <property type="match status" value="1"/>
</dbReference>
<dbReference type="Gene3D" id="3.90.470.20">
    <property type="entry name" value="4'-phosphopantetheinyl transferase domain"/>
    <property type="match status" value="1"/>
</dbReference>
<dbReference type="HAMAP" id="MF_00101">
    <property type="entry name" value="AcpS"/>
    <property type="match status" value="1"/>
</dbReference>
<dbReference type="InterPro" id="IPR008278">
    <property type="entry name" value="4-PPantetheinyl_Trfase_dom"/>
</dbReference>
<dbReference type="InterPro" id="IPR037143">
    <property type="entry name" value="4-PPantetheinyl_Trfase_dom_sf"/>
</dbReference>
<dbReference type="InterPro" id="IPR002582">
    <property type="entry name" value="ACPS"/>
</dbReference>
<dbReference type="InterPro" id="IPR004568">
    <property type="entry name" value="Ppantetheine-prot_Trfase_dom"/>
</dbReference>
<dbReference type="NCBIfam" id="TIGR00516">
    <property type="entry name" value="acpS"/>
    <property type="match status" value="1"/>
</dbReference>
<dbReference type="NCBIfam" id="TIGR00556">
    <property type="entry name" value="pantethn_trn"/>
    <property type="match status" value="1"/>
</dbReference>
<dbReference type="Pfam" id="PF01648">
    <property type="entry name" value="ACPS"/>
    <property type="match status" value="1"/>
</dbReference>
<dbReference type="SUPFAM" id="SSF56214">
    <property type="entry name" value="4'-phosphopantetheinyl transferase"/>
    <property type="match status" value="1"/>
</dbReference>
<comment type="function">
    <text evidence="1">Transfers the 4'-phosphopantetheine moiety from coenzyme A to a Ser of acyl-carrier-protein.</text>
</comment>
<comment type="catalytic activity">
    <reaction evidence="1">
        <text>apo-[ACP] + CoA = holo-[ACP] + adenosine 3',5'-bisphosphate + H(+)</text>
        <dbReference type="Rhea" id="RHEA:12068"/>
        <dbReference type="Rhea" id="RHEA-COMP:9685"/>
        <dbReference type="Rhea" id="RHEA-COMP:9690"/>
        <dbReference type="ChEBI" id="CHEBI:15378"/>
        <dbReference type="ChEBI" id="CHEBI:29999"/>
        <dbReference type="ChEBI" id="CHEBI:57287"/>
        <dbReference type="ChEBI" id="CHEBI:58343"/>
        <dbReference type="ChEBI" id="CHEBI:64479"/>
        <dbReference type="EC" id="2.7.8.7"/>
    </reaction>
</comment>
<comment type="cofactor">
    <cofactor evidence="1">
        <name>Mg(2+)</name>
        <dbReference type="ChEBI" id="CHEBI:18420"/>
    </cofactor>
</comment>
<comment type="subcellular location">
    <subcellularLocation>
        <location evidence="1">Cytoplasm</location>
    </subcellularLocation>
</comment>
<comment type="similarity">
    <text evidence="1">Belongs to the P-Pant transferase superfamily. AcpS family.</text>
</comment>
<name>ACPS_ESCF3</name>
<reference key="1">
    <citation type="journal article" date="2009" name="PLoS Genet.">
        <title>Organised genome dynamics in the Escherichia coli species results in highly diverse adaptive paths.</title>
        <authorList>
            <person name="Touchon M."/>
            <person name="Hoede C."/>
            <person name="Tenaillon O."/>
            <person name="Barbe V."/>
            <person name="Baeriswyl S."/>
            <person name="Bidet P."/>
            <person name="Bingen E."/>
            <person name="Bonacorsi S."/>
            <person name="Bouchier C."/>
            <person name="Bouvet O."/>
            <person name="Calteau A."/>
            <person name="Chiapello H."/>
            <person name="Clermont O."/>
            <person name="Cruveiller S."/>
            <person name="Danchin A."/>
            <person name="Diard M."/>
            <person name="Dossat C."/>
            <person name="Karoui M.E."/>
            <person name="Frapy E."/>
            <person name="Garry L."/>
            <person name="Ghigo J.M."/>
            <person name="Gilles A.M."/>
            <person name="Johnson J."/>
            <person name="Le Bouguenec C."/>
            <person name="Lescat M."/>
            <person name="Mangenot S."/>
            <person name="Martinez-Jehanne V."/>
            <person name="Matic I."/>
            <person name="Nassif X."/>
            <person name="Oztas S."/>
            <person name="Petit M.A."/>
            <person name="Pichon C."/>
            <person name="Rouy Z."/>
            <person name="Ruf C.S."/>
            <person name="Schneider D."/>
            <person name="Tourret J."/>
            <person name="Vacherie B."/>
            <person name="Vallenet D."/>
            <person name="Medigue C."/>
            <person name="Rocha E.P.C."/>
            <person name="Denamur E."/>
        </authorList>
    </citation>
    <scope>NUCLEOTIDE SEQUENCE [LARGE SCALE GENOMIC DNA]</scope>
    <source>
        <strain>ATCC 35469 / DSM 13698 / BCRC 15582 / CCUG 18766 / IAM 14443 / JCM 21226 / LMG 7866 / NBRC 102419 / NCTC 12128 / CDC 0568-73</strain>
    </source>
</reference>
<proteinExistence type="inferred from homology"/>
<accession>B7LV01</accession>
<sequence length="126" mass="14168">MAILGLGTDIVEIARIESVIARSGERLARRVLSDNEWEIWKTHHQPVRFLAKRFAVKEAAAKAFGTGIRNGLAFNQFEVFNDELGKPRLRLWGEALKLAEKLGVVNMHVTLADERHYACATVIIES</sequence>